<evidence type="ECO:0000255" key="1"/>
<evidence type="ECO:0000305" key="2"/>
<reference key="1">
    <citation type="journal article" date="1997" name="Nature">
        <title>The complete genome sequence of the hyperthermophilic, sulphate-reducing archaeon Archaeoglobus fulgidus.</title>
        <authorList>
            <person name="Klenk H.-P."/>
            <person name="Clayton R.A."/>
            <person name="Tomb J.-F."/>
            <person name="White O."/>
            <person name="Nelson K.E."/>
            <person name="Ketchum K.A."/>
            <person name="Dodson R.J."/>
            <person name="Gwinn M.L."/>
            <person name="Hickey E.K."/>
            <person name="Peterson J.D."/>
            <person name="Richardson D.L."/>
            <person name="Kerlavage A.R."/>
            <person name="Graham D.E."/>
            <person name="Kyrpides N.C."/>
            <person name="Fleischmann R.D."/>
            <person name="Quackenbush J."/>
            <person name="Lee N.H."/>
            <person name="Sutton G.G."/>
            <person name="Gill S.R."/>
            <person name="Kirkness E.F."/>
            <person name="Dougherty B.A."/>
            <person name="McKenney K."/>
            <person name="Adams M.D."/>
            <person name="Loftus B.J."/>
            <person name="Peterson S.N."/>
            <person name="Reich C.I."/>
            <person name="McNeil L.K."/>
            <person name="Badger J.H."/>
            <person name="Glodek A."/>
            <person name="Zhou L."/>
            <person name="Overbeek R."/>
            <person name="Gocayne J.D."/>
            <person name="Weidman J.F."/>
            <person name="McDonald L.A."/>
            <person name="Utterback T.R."/>
            <person name="Cotton M.D."/>
            <person name="Spriggs T."/>
            <person name="Artiach P."/>
            <person name="Kaine B.P."/>
            <person name="Sykes S.M."/>
            <person name="Sadow P.W."/>
            <person name="D'Andrea K.P."/>
            <person name="Bowman C."/>
            <person name="Fujii C."/>
            <person name="Garland S.A."/>
            <person name="Mason T.M."/>
            <person name="Olsen G.J."/>
            <person name="Fraser C.M."/>
            <person name="Smith H.O."/>
            <person name="Woese C.R."/>
            <person name="Venter J.C."/>
        </authorList>
    </citation>
    <scope>NUCLEOTIDE SEQUENCE [LARGE SCALE GENOMIC DNA]</scope>
    <source>
        <strain>ATCC 49558 / DSM 4304 / JCM 9628 / NBRC 100126 / VC-16</strain>
    </source>
</reference>
<protein>
    <recommendedName>
        <fullName>Uncharacterized protein AF_0762</fullName>
    </recommendedName>
</protein>
<sequence length="171" mass="18612">MCLQIGGGGMDLRGQTFTLEGVAASLLILLAVYTIFQSTVVIAPSWSDYANVQLKQLGYDILRVFDSDGGNSSLKGAIVNCSSGFKAPDEFNANLSKILDSLNAFGKVELIWVNGSKIESHALYGFNKTPTPDAVRVSRFVVVQDLNNSECFNLTTPTTKVVEVRLTLWRT</sequence>
<organism>
    <name type="scientific">Archaeoglobus fulgidus (strain ATCC 49558 / DSM 4304 / JCM 9628 / NBRC 100126 / VC-16)</name>
    <dbReference type="NCBI Taxonomy" id="224325"/>
    <lineage>
        <taxon>Archaea</taxon>
        <taxon>Methanobacteriati</taxon>
        <taxon>Methanobacteriota</taxon>
        <taxon>Archaeoglobi</taxon>
        <taxon>Archaeoglobales</taxon>
        <taxon>Archaeoglobaceae</taxon>
        <taxon>Archaeoglobus</taxon>
    </lineage>
</organism>
<keyword id="KW-0472">Membrane</keyword>
<keyword id="KW-1185">Reference proteome</keyword>
<keyword id="KW-0812">Transmembrane</keyword>
<keyword id="KW-1133">Transmembrane helix</keyword>
<accession>O29496</accession>
<feature type="chain" id="PRO_0000127920" description="Uncharacterized protein AF_0762">
    <location>
        <begin position="1"/>
        <end position="171"/>
    </location>
</feature>
<feature type="transmembrane region" description="Helical" evidence="1">
    <location>
        <begin position="21"/>
        <end position="43"/>
    </location>
</feature>
<comment type="subcellular location">
    <subcellularLocation>
        <location evidence="2">Membrane</location>
        <topology evidence="2">Single-pass membrane protein</topology>
    </subcellularLocation>
</comment>
<name>Y762_ARCFU</name>
<dbReference type="EMBL" id="AE000782">
    <property type="protein sequence ID" value="AAB90483.1"/>
    <property type="molecule type" value="Genomic_DNA"/>
</dbReference>
<dbReference type="PIR" id="B69345">
    <property type="entry name" value="B69345"/>
</dbReference>
<dbReference type="STRING" id="224325.AF_0762"/>
<dbReference type="PaxDb" id="224325-AF_0762"/>
<dbReference type="EnsemblBacteria" id="AAB90483">
    <property type="protein sequence ID" value="AAB90483"/>
    <property type="gene ID" value="AF_0762"/>
</dbReference>
<dbReference type="KEGG" id="afu:AF_0762"/>
<dbReference type="eggNOG" id="arCOG04652">
    <property type="taxonomic scope" value="Archaea"/>
</dbReference>
<dbReference type="HOGENOM" id="CLU_133048_0_0_2"/>
<dbReference type="Proteomes" id="UP000002199">
    <property type="component" value="Chromosome"/>
</dbReference>
<dbReference type="GO" id="GO:0016020">
    <property type="term" value="C:membrane"/>
    <property type="evidence" value="ECO:0007669"/>
    <property type="project" value="UniProtKB-SubCell"/>
</dbReference>
<dbReference type="InterPro" id="IPR055712">
    <property type="entry name" value="DUF7288"/>
</dbReference>
<dbReference type="Pfam" id="PF23959">
    <property type="entry name" value="DUF7288"/>
    <property type="match status" value="1"/>
</dbReference>
<gene>
    <name type="ordered locus">AF_0762</name>
</gene>
<proteinExistence type="predicted"/>